<sequence>MYDRAPRFTQLTLSSTTSEIGPGTYNINRSLGGDRGSYAPFLSLSIRDSGFLGSASALHSPGPGQYNSDITRNHVLGGNSLQNRSKRFDDVLSDVPGPGAYNVTNDVSPARKIKAKSPKITSKAVRPSLSPAAPSIPSPGQAFGYEEDAQGVLHKHKVPSRDHSLGPAFYSPAPEELWSSQKYKGVQFGKMSGRREPLKGADEPGPGHYELQEDQTVQYENVNVKREQRSRSELSIPRYHELVPLQEEKKGVPGPGQYYIKSQFETSSNTHRPAQSPPFLSQAQRFSPVKDETPPVGAYNDPRCALEILKKGRALNKNPFGQTAVRFLPENRSKATPGPGAYNMFGYGLAQESLKKASLQSSRKAAFGSVAQRRIFLPSKEEMSTPGPTQYKVEKTNEALYKKQSTAAFKSASDRLVVSLFAKDTPPPGSYNVSQSFEKTQCLHQYSKPRNENARKRQSCFLSAASRNTDVLHNDPHTPGPAYYSPDVKSSSTLALIISKEDRFKDPKDEVPGPTAYELSPVIMDTVLKGTFNVTLHNPLMSSTRSLSSHRSWRKPTAHSSA</sequence>
<reference key="1">
    <citation type="submission" date="2006-10" db="EMBL/GenBank/DDBJ databases">
        <authorList>
            <consortium name="NIH - Zebrafish Gene Collection (ZGC) project"/>
        </authorList>
    </citation>
    <scope>NUCLEOTIDE SEQUENCE [LARGE SCALE MRNA]</scope>
</reference>
<gene>
    <name type="primary">stpg2</name>
    <name type="ORF">zgc:153987</name>
</gene>
<keyword id="KW-1185">Reference proteome</keyword>
<keyword id="KW-0677">Repeat</keyword>
<proteinExistence type="evidence at transcript level"/>
<name>STPG2_DANRE</name>
<dbReference type="EMBL" id="BC124784">
    <property type="protein sequence ID" value="AAI24785.1"/>
    <property type="molecule type" value="mRNA"/>
</dbReference>
<dbReference type="RefSeq" id="NP_001070815.1">
    <property type="nucleotide sequence ID" value="NM_001077347.1"/>
</dbReference>
<dbReference type="FunCoup" id="Q08BC4">
    <property type="interactions" value="17"/>
</dbReference>
<dbReference type="STRING" id="7955.ENSDARP00000081101"/>
<dbReference type="GeneID" id="768205"/>
<dbReference type="KEGG" id="dre:768205"/>
<dbReference type="AGR" id="ZFIN:ZDB-GENE-061013-667"/>
<dbReference type="CTD" id="285555"/>
<dbReference type="ZFIN" id="ZDB-GENE-061013-667">
    <property type="gene designation" value="stpg2"/>
</dbReference>
<dbReference type="InParanoid" id="Q08BC4"/>
<dbReference type="OrthoDB" id="406368at2759"/>
<dbReference type="PhylomeDB" id="Q08BC4"/>
<dbReference type="PRO" id="PR:Q08BC4"/>
<dbReference type="Proteomes" id="UP000000437">
    <property type="component" value="Chromosome 5"/>
</dbReference>
<dbReference type="InterPro" id="IPR051291">
    <property type="entry name" value="CIMAP"/>
</dbReference>
<dbReference type="InterPro" id="IPR010736">
    <property type="entry name" value="SHIPPO-rpt"/>
</dbReference>
<dbReference type="PANTHER" id="PTHR21580">
    <property type="entry name" value="SHIPPO-1-RELATED"/>
    <property type="match status" value="1"/>
</dbReference>
<dbReference type="Pfam" id="PF07004">
    <property type="entry name" value="SHIPPO-rpt"/>
    <property type="match status" value="6"/>
</dbReference>
<protein>
    <recommendedName>
        <fullName>Sperm-tail PG-rich repeat-containing protein 2</fullName>
    </recommendedName>
</protein>
<organism>
    <name type="scientific">Danio rerio</name>
    <name type="common">Zebrafish</name>
    <name type="synonym">Brachydanio rerio</name>
    <dbReference type="NCBI Taxonomy" id="7955"/>
    <lineage>
        <taxon>Eukaryota</taxon>
        <taxon>Metazoa</taxon>
        <taxon>Chordata</taxon>
        <taxon>Craniata</taxon>
        <taxon>Vertebrata</taxon>
        <taxon>Euteleostomi</taxon>
        <taxon>Actinopterygii</taxon>
        <taxon>Neopterygii</taxon>
        <taxon>Teleostei</taxon>
        <taxon>Ostariophysi</taxon>
        <taxon>Cypriniformes</taxon>
        <taxon>Danionidae</taxon>
        <taxon>Danioninae</taxon>
        <taxon>Danio</taxon>
    </lineage>
</organism>
<accession>Q08BC4</accession>
<evidence type="ECO:0000256" key="1">
    <source>
        <dbReference type="SAM" id="MobiDB-lite"/>
    </source>
</evidence>
<feature type="chain" id="PRO_0000311963" description="Sperm-tail PG-rich repeat-containing protein 2">
    <location>
        <begin position="1"/>
        <end position="562"/>
    </location>
</feature>
<feature type="repeat" description="STPGR 1">
    <location>
        <begin position="21"/>
        <end position="31"/>
    </location>
</feature>
<feature type="repeat" description="STPGR 2">
    <location>
        <begin position="60"/>
        <end position="73"/>
    </location>
</feature>
<feature type="repeat" description="STPGR 3">
    <location>
        <begin position="96"/>
        <end position="118"/>
    </location>
</feature>
<feature type="repeat" description="STPGR 4">
    <location>
        <begin position="204"/>
        <end position="227"/>
    </location>
</feature>
<feature type="repeat" description="STPGR 5">
    <location>
        <begin position="253"/>
        <end position="271"/>
    </location>
</feature>
<feature type="repeat" description="STPGR 6">
    <location>
        <begin position="336"/>
        <end position="350"/>
    </location>
</feature>
<feature type="repeat" description="STPGR 7">
    <location>
        <begin position="385"/>
        <end position="409"/>
    </location>
</feature>
<feature type="repeat" description="STPGR 8">
    <location>
        <begin position="425"/>
        <end position="462"/>
    </location>
</feature>
<feature type="repeat" description="STPGR 9">
    <location>
        <begin position="478"/>
        <end position="492"/>
    </location>
</feature>
<feature type="region of interest" description="Disordered" evidence="1">
    <location>
        <begin position="114"/>
        <end position="136"/>
    </location>
</feature>
<feature type="region of interest" description="Disordered" evidence="1">
    <location>
        <begin position="192"/>
        <end position="215"/>
    </location>
</feature>
<feature type="region of interest" description="Disordered" evidence="1">
    <location>
        <begin position="543"/>
        <end position="562"/>
    </location>
</feature>
<feature type="compositionally biased region" description="Low complexity" evidence="1">
    <location>
        <begin position="127"/>
        <end position="136"/>
    </location>
</feature>
<feature type="compositionally biased region" description="Basic and acidic residues" evidence="1">
    <location>
        <begin position="193"/>
        <end position="202"/>
    </location>
</feature>
<feature type="compositionally biased region" description="Basic residues" evidence="1">
    <location>
        <begin position="551"/>
        <end position="562"/>
    </location>
</feature>